<sequence>MATQPATESVQCFGRKKTAVAVTHCKRGSGLIKLNGCPIELFQPEILRFKIFEPVLLLGKHRFAGVNMRIRVNGGGHTSQVYAIRQSIAKALVAYYQKYVDEQSKKEIKDILVRYDRTLLVADPRRCEPKKFGGRGARSRYQKSYR</sequence>
<reference key="1">
    <citation type="journal article" date="2000" name="Nature">
        <title>Sequence and analysis of chromosome 5 of the plant Arabidopsis thaliana.</title>
        <authorList>
            <person name="Tabata S."/>
            <person name="Kaneko T."/>
            <person name="Nakamura Y."/>
            <person name="Kotani H."/>
            <person name="Kato T."/>
            <person name="Asamizu E."/>
            <person name="Miyajima N."/>
            <person name="Sasamoto S."/>
            <person name="Kimura T."/>
            <person name="Hosouchi T."/>
            <person name="Kawashima K."/>
            <person name="Kohara M."/>
            <person name="Matsumoto M."/>
            <person name="Matsuno A."/>
            <person name="Muraki A."/>
            <person name="Nakayama S."/>
            <person name="Nakazaki N."/>
            <person name="Naruo K."/>
            <person name="Okumura S."/>
            <person name="Shinpo S."/>
            <person name="Takeuchi C."/>
            <person name="Wada T."/>
            <person name="Watanabe A."/>
            <person name="Yamada M."/>
            <person name="Yasuda M."/>
            <person name="Sato S."/>
            <person name="de la Bastide M."/>
            <person name="Huang E."/>
            <person name="Spiegel L."/>
            <person name="Gnoj L."/>
            <person name="O'Shaughnessy A."/>
            <person name="Preston R."/>
            <person name="Habermann K."/>
            <person name="Murray J."/>
            <person name="Johnson D."/>
            <person name="Rohlfing T."/>
            <person name="Nelson J."/>
            <person name="Stoneking T."/>
            <person name="Pepin K."/>
            <person name="Spieth J."/>
            <person name="Sekhon M."/>
            <person name="Armstrong J."/>
            <person name="Becker M."/>
            <person name="Belter E."/>
            <person name="Cordum H."/>
            <person name="Cordes M."/>
            <person name="Courtney L."/>
            <person name="Courtney W."/>
            <person name="Dante M."/>
            <person name="Du H."/>
            <person name="Edwards J."/>
            <person name="Fryman J."/>
            <person name="Haakensen B."/>
            <person name="Lamar E."/>
            <person name="Latreille P."/>
            <person name="Leonard S."/>
            <person name="Meyer R."/>
            <person name="Mulvaney E."/>
            <person name="Ozersky P."/>
            <person name="Riley A."/>
            <person name="Strowmatt C."/>
            <person name="Wagner-McPherson C."/>
            <person name="Wollam A."/>
            <person name="Yoakum M."/>
            <person name="Bell M."/>
            <person name="Dedhia N."/>
            <person name="Parnell L."/>
            <person name="Shah R."/>
            <person name="Rodriguez M."/>
            <person name="Hoon See L."/>
            <person name="Vil D."/>
            <person name="Baker J."/>
            <person name="Kirchoff K."/>
            <person name="Toth K."/>
            <person name="King L."/>
            <person name="Bahret A."/>
            <person name="Miller B."/>
            <person name="Marra M.A."/>
            <person name="Martienssen R."/>
            <person name="McCombie W.R."/>
            <person name="Wilson R.K."/>
            <person name="Murphy G."/>
            <person name="Bancroft I."/>
            <person name="Volckaert G."/>
            <person name="Wambutt R."/>
            <person name="Duesterhoeft A."/>
            <person name="Stiekema W."/>
            <person name="Pohl T."/>
            <person name="Entian K.-D."/>
            <person name="Terryn N."/>
            <person name="Hartley N."/>
            <person name="Bent E."/>
            <person name="Johnson S."/>
            <person name="Langham S.-A."/>
            <person name="McCullagh B."/>
            <person name="Robben J."/>
            <person name="Grymonprez B."/>
            <person name="Zimmermann W."/>
            <person name="Ramsperger U."/>
            <person name="Wedler H."/>
            <person name="Balke K."/>
            <person name="Wedler E."/>
            <person name="Peters S."/>
            <person name="van Staveren M."/>
            <person name="Dirkse W."/>
            <person name="Mooijman P."/>
            <person name="Klein Lankhorst R."/>
            <person name="Weitzenegger T."/>
            <person name="Bothe G."/>
            <person name="Rose M."/>
            <person name="Hauf J."/>
            <person name="Berneiser S."/>
            <person name="Hempel S."/>
            <person name="Feldpausch M."/>
            <person name="Lamberth S."/>
            <person name="Villarroel R."/>
            <person name="Gielen J."/>
            <person name="Ardiles W."/>
            <person name="Bents O."/>
            <person name="Lemcke K."/>
            <person name="Kolesov G."/>
            <person name="Mayer K.F.X."/>
            <person name="Rudd S."/>
            <person name="Schoof H."/>
            <person name="Schueller C."/>
            <person name="Zaccaria P."/>
            <person name="Mewes H.-W."/>
            <person name="Bevan M."/>
            <person name="Fransz P.F."/>
        </authorList>
    </citation>
    <scope>NUCLEOTIDE SEQUENCE [LARGE SCALE GENOMIC DNA]</scope>
    <source>
        <strain>cv. Columbia</strain>
    </source>
</reference>
<reference key="2">
    <citation type="journal article" date="2017" name="Plant J.">
        <title>Araport11: a complete reannotation of the Arabidopsis thaliana reference genome.</title>
        <authorList>
            <person name="Cheng C.Y."/>
            <person name="Krishnakumar V."/>
            <person name="Chan A.P."/>
            <person name="Thibaud-Nissen F."/>
            <person name="Schobel S."/>
            <person name="Town C.D."/>
        </authorList>
    </citation>
    <scope>GENOME REANNOTATION</scope>
    <source>
        <strain>cv. Columbia</strain>
    </source>
</reference>
<reference key="3">
    <citation type="journal article" date="2003" name="Science">
        <title>Empirical analysis of transcriptional activity in the Arabidopsis genome.</title>
        <authorList>
            <person name="Yamada K."/>
            <person name="Lim J."/>
            <person name="Dale J.M."/>
            <person name="Chen H."/>
            <person name="Shinn P."/>
            <person name="Palm C.J."/>
            <person name="Southwick A.M."/>
            <person name="Wu H.C."/>
            <person name="Kim C.J."/>
            <person name="Nguyen M."/>
            <person name="Pham P.K."/>
            <person name="Cheuk R.F."/>
            <person name="Karlin-Newmann G."/>
            <person name="Liu S.X."/>
            <person name="Lam B."/>
            <person name="Sakano H."/>
            <person name="Wu T."/>
            <person name="Yu G."/>
            <person name="Miranda M."/>
            <person name="Quach H.L."/>
            <person name="Tripp M."/>
            <person name="Chang C.H."/>
            <person name="Lee J.M."/>
            <person name="Toriumi M.J."/>
            <person name="Chan M.M."/>
            <person name="Tang C.C."/>
            <person name="Onodera C.S."/>
            <person name="Deng J.M."/>
            <person name="Akiyama K."/>
            <person name="Ansari Y."/>
            <person name="Arakawa T."/>
            <person name="Banh J."/>
            <person name="Banno F."/>
            <person name="Bowser L."/>
            <person name="Brooks S.Y."/>
            <person name="Carninci P."/>
            <person name="Chao Q."/>
            <person name="Choy N."/>
            <person name="Enju A."/>
            <person name="Goldsmith A.D."/>
            <person name="Gurjal M."/>
            <person name="Hansen N.F."/>
            <person name="Hayashizaki Y."/>
            <person name="Johnson-Hopson C."/>
            <person name="Hsuan V.W."/>
            <person name="Iida K."/>
            <person name="Karnes M."/>
            <person name="Khan S."/>
            <person name="Koesema E."/>
            <person name="Ishida J."/>
            <person name="Jiang P.X."/>
            <person name="Jones T."/>
            <person name="Kawai J."/>
            <person name="Kamiya A."/>
            <person name="Meyers C."/>
            <person name="Nakajima M."/>
            <person name="Narusaka M."/>
            <person name="Seki M."/>
            <person name="Sakurai T."/>
            <person name="Satou M."/>
            <person name="Tamse R."/>
            <person name="Vaysberg M."/>
            <person name="Wallender E.K."/>
            <person name="Wong C."/>
            <person name="Yamamura Y."/>
            <person name="Yuan S."/>
            <person name="Shinozaki K."/>
            <person name="Davis R.W."/>
            <person name="Theologis A."/>
            <person name="Ecker J.R."/>
        </authorList>
    </citation>
    <scope>NUCLEOTIDE SEQUENCE [LARGE SCALE MRNA]</scope>
    <source>
        <strain>cv. Columbia</strain>
    </source>
</reference>
<reference key="4">
    <citation type="journal article" date="1996" name="Plant J.">
        <title>Further progress towards a catalogue of all Arabidopsis genes: analysis of a set of 5000 non-redundant ESTs.</title>
        <authorList>
            <person name="Cooke R."/>
            <person name="Raynal M."/>
            <person name="Laudie M."/>
            <person name="Grellet F."/>
            <person name="Delseny M."/>
            <person name="Morris P.-C."/>
            <person name="Guerrier D."/>
            <person name="Giraudat J."/>
            <person name="Quigley F."/>
            <person name="Clabault G."/>
            <person name="Li Y.-F."/>
            <person name="Mache R."/>
            <person name="Krivitzky M."/>
            <person name="Gy I.J.-J."/>
            <person name="Kreis M."/>
            <person name="Lecharny A."/>
            <person name="Parmentier Y."/>
            <person name="Marbach J."/>
            <person name="Fleck J."/>
            <person name="Clement B."/>
            <person name="Philipps G."/>
            <person name="Herve C."/>
            <person name="Bardet C."/>
            <person name="Tremousaygue D."/>
            <person name="Lescure B."/>
            <person name="Lacomme C."/>
            <person name="Roby D."/>
            <person name="Jourjon M.-F."/>
            <person name="Chabrier P."/>
            <person name="Charpenteau J.-L."/>
            <person name="Desprez T."/>
            <person name="Amselem J."/>
            <person name="Chiapello H."/>
            <person name="Hoefte H."/>
        </authorList>
    </citation>
    <scope>NUCLEOTIDE SEQUENCE [LARGE SCALE MRNA]</scope>
    <source>
        <strain>cv. Columbia</strain>
    </source>
</reference>
<reference key="5">
    <citation type="journal article" date="2001" name="Plant Physiol.">
        <title>The organization of cytoplasmic ribosomal protein genes in the Arabidopsis genome.</title>
        <authorList>
            <person name="Barakat A."/>
            <person name="Szick-Miranda K."/>
            <person name="Chang I.-F."/>
            <person name="Guyot R."/>
            <person name="Blanc G."/>
            <person name="Cooke R."/>
            <person name="Delseny M."/>
            <person name="Bailey-Serres J."/>
        </authorList>
    </citation>
    <scope>GENE FAMILY ORGANIZATION</scope>
    <scope>NOMENCLATURE</scope>
</reference>
<reference key="6">
    <citation type="journal article" date="2023" name="Plant Cell">
        <title>An updated nomenclature for plant ribosomal protein genes.</title>
        <authorList>
            <person name="Scarpin M.R."/>
            <person name="Busche M."/>
            <person name="Martinez R.E."/>
            <person name="Harper L.C."/>
            <person name="Reiser L."/>
            <person name="Szakonyi D."/>
            <person name="Merchante C."/>
            <person name="Lan T."/>
            <person name="Xiong W."/>
            <person name="Mo B."/>
            <person name="Tang G."/>
            <person name="Chen X."/>
            <person name="Bailey-Serres J."/>
            <person name="Browning K.S."/>
            <person name="Brunkard J.O."/>
        </authorList>
    </citation>
    <scope>NOMENCLATURE</scope>
</reference>
<protein>
    <recommendedName>
        <fullName evidence="1">Small ribosomal subunit protein uS9x</fullName>
    </recommendedName>
    <alternativeName>
        <fullName>40S ribosomal protein S16-3</fullName>
    </alternativeName>
</protein>
<accession>Q42340</accession>
<dbReference type="EMBL" id="AC051626">
    <property type="status" value="NOT_ANNOTATED_CDS"/>
    <property type="molecule type" value="Genomic_DNA"/>
</dbReference>
<dbReference type="EMBL" id="CP002688">
    <property type="protein sequence ID" value="AED92546.1"/>
    <property type="molecule type" value="Genomic_DNA"/>
</dbReference>
<dbReference type="EMBL" id="AF370178">
    <property type="protein sequence ID" value="AAK43993.1"/>
    <property type="molecule type" value="mRNA"/>
</dbReference>
<dbReference type="EMBL" id="AY059138">
    <property type="protein sequence ID" value="AAL15244.1"/>
    <property type="molecule type" value="mRNA"/>
</dbReference>
<dbReference type="EMBL" id="Z35385">
    <property type="protein sequence ID" value="CAA84574.1"/>
    <property type="molecule type" value="mRNA"/>
</dbReference>
<dbReference type="EMBL" id="F19995">
    <property type="protein sequence ID" value="CAA23374.1"/>
    <property type="molecule type" value="mRNA"/>
</dbReference>
<dbReference type="RefSeq" id="NP_197339.1">
    <molecule id="Q42340-1"/>
    <property type="nucleotide sequence ID" value="NM_121843.3"/>
</dbReference>
<dbReference type="SMR" id="Q42340"/>
<dbReference type="BioGRID" id="17232">
    <property type="interactions" value="156"/>
</dbReference>
<dbReference type="FunCoup" id="Q42340">
    <property type="interactions" value="2491"/>
</dbReference>
<dbReference type="IntAct" id="Q42340">
    <property type="interactions" value="3"/>
</dbReference>
<dbReference type="STRING" id="3702.Q42340"/>
<dbReference type="PaxDb" id="3702-AT5G18380.1"/>
<dbReference type="EnsemblPlants" id="AT5G18380.1">
    <molecule id="Q42340-1"/>
    <property type="protein sequence ID" value="AT5G18380.1"/>
    <property type="gene ID" value="AT5G18380"/>
</dbReference>
<dbReference type="GeneID" id="831956"/>
<dbReference type="Gramene" id="AT5G18380.1">
    <molecule id="Q42340-1"/>
    <property type="protein sequence ID" value="AT5G18380.1"/>
    <property type="gene ID" value="AT5G18380"/>
</dbReference>
<dbReference type="KEGG" id="ath:AT5G18380"/>
<dbReference type="Araport" id="AT5G18380"/>
<dbReference type="TAIR" id="AT5G18380"/>
<dbReference type="eggNOG" id="KOG1753">
    <property type="taxonomic scope" value="Eukaryota"/>
</dbReference>
<dbReference type="HOGENOM" id="CLU_046483_4_0_1"/>
<dbReference type="InParanoid" id="Q42340"/>
<dbReference type="OMA" id="AHCKKGQ"/>
<dbReference type="OrthoDB" id="1029954at2759"/>
<dbReference type="PhylomeDB" id="Q42340"/>
<dbReference type="CD-CODE" id="4299E36E">
    <property type="entry name" value="Nucleolus"/>
</dbReference>
<dbReference type="PRO" id="PR:Q42340"/>
<dbReference type="Proteomes" id="UP000006548">
    <property type="component" value="Chromosome 5"/>
</dbReference>
<dbReference type="ExpressionAtlas" id="Q42340">
    <property type="expression patterns" value="baseline and differential"/>
</dbReference>
<dbReference type="GO" id="GO:0009507">
    <property type="term" value="C:chloroplast"/>
    <property type="evidence" value="ECO:0007005"/>
    <property type="project" value="TAIR"/>
</dbReference>
<dbReference type="GO" id="GO:0022627">
    <property type="term" value="C:cytosolic small ribosomal subunit"/>
    <property type="evidence" value="ECO:0007005"/>
    <property type="project" value="TAIR"/>
</dbReference>
<dbReference type="GO" id="GO:0009506">
    <property type="term" value="C:plasmodesma"/>
    <property type="evidence" value="ECO:0007005"/>
    <property type="project" value="TAIR"/>
</dbReference>
<dbReference type="GO" id="GO:0009536">
    <property type="term" value="C:plastid"/>
    <property type="evidence" value="ECO:0007005"/>
    <property type="project" value="TAIR"/>
</dbReference>
<dbReference type="GO" id="GO:0003729">
    <property type="term" value="F:mRNA binding"/>
    <property type="evidence" value="ECO:0000314"/>
    <property type="project" value="TAIR"/>
</dbReference>
<dbReference type="GO" id="GO:0003735">
    <property type="term" value="F:structural constituent of ribosome"/>
    <property type="evidence" value="ECO:0000314"/>
    <property type="project" value="CAFA"/>
</dbReference>
<dbReference type="GO" id="GO:0006412">
    <property type="term" value="P:translation"/>
    <property type="evidence" value="ECO:0007669"/>
    <property type="project" value="InterPro"/>
</dbReference>
<dbReference type="FunFam" id="3.30.230.10:FF:000007">
    <property type="entry name" value="40S ribosomal protein S16"/>
    <property type="match status" value="1"/>
</dbReference>
<dbReference type="Gene3D" id="3.30.230.10">
    <property type="match status" value="1"/>
</dbReference>
<dbReference type="InterPro" id="IPR020568">
    <property type="entry name" value="Ribosomal_Su5_D2-typ_SF"/>
</dbReference>
<dbReference type="InterPro" id="IPR000754">
    <property type="entry name" value="Ribosomal_uS9"/>
</dbReference>
<dbReference type="InterPro" id="IPR020574">
    <property type="entry name" value="Ribosomal_uS9_CS"/>
</dbReference>
<dbReference type="InterPro" id="IPR014721">
    <property type="entry name" value="Ribsml_uS5_D2-typ_fold_subgr"/>
</dbReference>
<dbReference type="PANTHER" id="PTHR21569:SF16">
    <property type="entry name" value="RIBOSOMAL PROTEIN S16"/>
    <property type="match status" value="1"/>
</dbReference>
<dbReference type="PANTHER" id="PTHR21569">
    <property type="entry name" value="RIBOSOMAL PROTEIN S9"/>
    <property type="match status" value="1"/>
</dbReference>
<dbReference type="Pfam" id="PF00380">
    <property type="entry name" value="Ribosomal_S9"/>
    <property type="match status" value="1"/>
</dbReference>
<dbReference type="SUPFAM" id="SSF54211">
    <property type="entry name" value="Ribosomal protein S5 domain 2-like"/>
    <property type="match status" value="1"/>
</dbReference>
<dbReference type="PROSITE" id="PS00360">
    <property type="entry name" value="RIBOSOMAL_S9"/>
    <property type="match status" value="1"/>
</dbReference>
<organism>
    <name type="scientific">Arabidopsis thaliana</name>
    <name type="common">Mouse-ear cress</name>
    <dbReference type="NCBI Taxonomy" id="3702"/>
    <lineage>
        <taxon>Eukaryota</taxon>
        <taxon>Viridiplantae</taxon>
        <taxon>Streptophyta</taxon>
        <taxon>Embryophyta</taxon>
        <taxon>Tracheophyta</taxon>
        <taxon>Spermatophyta</taxon>
        <taxon>Magnoliopsida</taxon>
        <taxon>eudicotyledons</taxon>
        <taxon>Gunneridae</taxon>
        <taxon>Pentapetalae</taxon>
        <taxon>rosids</taxon>
        <taxon>malvids</taxon>
        <taxon>Brassicales</taxon>
        <taxon>Brassicaceae</taxon>
        <taxon>Camelineae</taxon>
        <taxon>Arabidopsis</taxon>
    </lineage>
</organism>
<comment type="subcellular location">
    <subcellularLocation>
        <location>Cytoplasm</location>
    </subcellularLocation>
</comment>
<comment type="alternative products">
    <event type="alternative splicing"/>
    <isoform>
        <id>Q42340-1</id>
        <name>1</name>
        <sequence type="displayed"/>
    </isoform>
    <text>A number of isoforms are produced. According to EST sequences.</text>
</comment>
<comment type="similarity">
    <text evidence="2">Belongs to the universal ribosomal protein uS9 family.</text>
</comment>
<gene>
    <name type="primary">RPS16C</name>
    <name type="ordered locus">At5g18380</name>
    <name type="ORF">F20L16.100</name>
</gene>
<evidence type="ECO:0000303" key="1">
    <source>
    </source>
</evidence>
<evidence type="ECO:0000305" key="2"/>
<keyword id="KW-0025">Alternative splicing</keyword>
<keyword id="KW-0963">Cytoplasm</keyword>
<keyword id="KW-1185">Reference proteome</keyword>
<keyword id="KW-0687">Ribonucleoprotein</keyword>
<keyword id="KW-0689">Ribosomal protein</keyword>
<proteinExistence type="evidence at transcript level"/>
<feature type="chain" id="PRO_0000111489" description="Small ribosomal subunit protein uS9x">
    <location>
        <begin position="1"/>
        <end position="146"/>
    </location>
</feature>
<name>RS163_ARATH</name>